<dbReference type="EC" id="2.7.11.1" evidence="4"/>
<dbReference type="EMBL" id="CM018227">
    <property type="protein sequence ID" value="KAB1996350.1"/>
    <property type="molecule type" value="Genomic_DNA"/>
</dbReference>
<dbReference type="OrthoDB" id="4062651at2759"/>
<dbReference type="Proteomes" id="UP000327439">
    <property type="component" value="Chromosome D13"/>
</dbReference>
<dbReference type="GO" id="GO:0005886">
    <property type="term" value="C:plasma membrane"/>
    <property type="evidence" value="ECO:0007669"/>
    <property type="project" value="UniProtKB-SubCell"/>
</dbReference>
<dbReference type="GO" id="GO:0005524">
    <property type="term" value="F:ATP binding"/>
    <property type="evidence" value="ECO:0007669"/>
    <property type="project" value="InterPro"/>
</dbReference>
<dbReference type="GO" id="GO:0004672">
    <property type="term" value="F:protein kinase activity"/>
    <property type="evidence" value="ECO:0007669"/>
    <property type="project" value="InterPro"/>
</dbReference>
<dbReference type="CDD" id="cd14066">
    <property type="entry name" value="STKc_IRAK"/>
    <property type="match status" value="1"/>
</dbReference>
<dbReference type="FunFam" id="1.10.510.10:FF:000258">
    <property type="entry name" value="Probable serine/threonine-protein kinase PBL8"/>
    <property type="match status" value="1"/>
</dbReference>
<dbReference type="FunFam" id="3.30.200.20:FF:000228">
    <property type="entry name" value="Serine/threonine-protein kinase BIK1"/>
    <property type="match status" value="1"/>
</dbReference>
<dbReference type="Gene3D" id="3.30.200.20">
    <property type="entry name" value="Phosphorylase Kinase, domain 1"/>
    <property type="match status" value="1"/>
</dbReference>
<dbReference type="Gene3D" id="1.10.510.10">
    <property type="entry name" value="Transferase(Phosphotransferase) domain 1"/>
    <property type="match status" value="1"/>
</dbReference>
<dbReference type="InterPro" id="IPR011009">
    <property type="entry name" value="Kinase-like_dom_sf"/>
</dbReference>
<dbReference type="InterPro" id="IPR050823">
    <property type="entry name" value="Plant_Ser_Thr_Prot_Kinase"/>
</dbReference>
<dbReference type="InterPro" id="IPR000719">
    <property type="entry name" value="Prot_kinase_dom"/>
</dbReference>
<dbReference type="InterPro" id="IPR001245">
    <property type="entry name" value="Ser-Thr/Tyr_kinase_cat_dom"/>
</dbReference>
<dbReference type="InterPro" id="IPR008271">
    <property type="entry name" value="Ser/Thr_kinase_AS"/>
</dbReference>
<dbReference type="PANTHER" id="PTHR45621">
    <property type="entry name" value="OS01G0588500 PROTEIN-RELATED"/>
    <property type="match status" value="1"/>
</dbReference>
<dbReference type="Pfam" id="PF07714">
    <property type="entry name" value="PK_Tyr_Ser-Thr"/>
    <property type="match status" value="1"/>
</dbReference>
<dbReference type="SUPFAM" id="SSF56112">
    <property type="entry name" value="Protein kinase-like (PK-like)"/>
    <property type="match status" value="1"/>
</dbReference>
<dbReference type="PROSITE" id="PS50011">
    <property type="entry name" value="PROTEIN_KINASE_DOM"/>
    <property type="match status" value="1"/>
</dbReference>
<dbReference type="PROSITE" id="PS00108">
    <property type="entry name" value="PROTEIN_KINASE_ST"/>
    <property type="match status" value="1"/>
</dbReference>
<reference key="1">
    <citation type="journal article" date="2020" name="Nat. Genet.">
        <title>Genomic diversifications of five Gossypium allopolyploid species and their impact on cotton improvement.</title>
        <authorList>
            <person name="Chen Z.J."/>
            <person name="Sreedasyam A."/>
            <person name="Ando A."/>
            <person name="Song Q."/>
            <person name="De Santiago L.M."/>
            <person name="Hulse-Kemp A.M."/>
            <person name="Ding M."/>
            <person name="Ye W."/>
            <person name="Kirkbride R.C."/>
            <person name="Jenkins J."/>
            <person name="Plott C."/>
            <person name="Lovell J."/>
            <person name="Lin Y.M."/>
            <person name="Vaughn R."/>
            <person name="Liu B."/>
            <person name="Simpson S."/>
            <person name="Scheffler B.E."/>
            <person name="Wen L."/>
            <person name="Saski C.A."/>
            <person name="Grover C.E."/>
            <person name="Hu G."/>
            <person name="Conover J.L."/>
            <person name="Carlson J.W."/>
            <person name="Shu S."/>
            <person name="Boston L.B."/>
            <person name="Williams M."/>
            <person name="Peterson D.G."/>
            <person name="McGee K."/>
            <person name="Jones D.C."/>
            <person name="Wendel J.F."/>
            <person name="Stelly D.M."/>
            <person name="Grimwood J."/>
            <person name="Schmutz J."/>
        </authorList>
    </citation>
    <scope>NUCLEOTIDE SEQUENCE [LARGE SCALE GENOMIC DNA]</scope>
    <source>
        <strain>cv. 3-79</strain>
    </source>
</reference>
<reference key="2">
    <citation type="journal article" date="2025" name="Adv. Sci.">
        <title>Recognition of a fungal effector potentiates pathogen-associated molecular pattern-triggered immunity in cotton.</title>
        <authorList>
            <person name="Sun L."/>
            <person name="Li X."/>
            <person name="Zhong J."/>
            <person name="Wang Y."/>
            <person name="Li B."/>
            <person name="Ye Z."/>
            <person name="Zhang J."/>
        </authorList>
    </citation>
    <scope>FUNCTION</scope>
    <scope>DISRUPTION PHENOTYPE</scope>
    <scope>INTERACTION WITH V.DAHLIAE EPD1</scope>
    <scope>INDUCTION BY V.DAHLIAE EPD1</scope>
    <scope>TISSUE SPECIFICITY</scope>
    <source>
        <strain>cv. Hai7124</strain>
    </source>
</reference>
<feature type="chain" id="PRO_0000462494" description="EPD1-interacting receptor-like cytoplasmic serine/threonine-protein kinase 5D">
    <location>
        <begin position="1"/>
        <end position="460"/>
    </location>
</feature>
<feature type="domain" description="Protein kinase" evidence="3">
    <location>
        <begin position="83"/>
        <end position="364"/>
    </location>
</feature>
<feature type="active site" description="Proton acceptor" evidence="3 4">
    <location>
        <position position="213"/>
    </location>
</feature>
<feature type="binding site" evidence="3">
    <location>
        <begin position="89"/>
        <end position="97"/>
    </location>
    <ligand>
        <name>ATP</name>
        <dbReference type="ChEBI" id="CHEBI:30616"/>
    </ligand>
</feature>
<feature type="binding site" evidence="3">
    <location>
        <position position="118"/>
    </location>
    <ligand>
        <name>ATP</name>
        <dbReference type="ChEBI" id="CHEBI:30616"/>
    </ligand>
</feature>
<feature type="modified residue" description="Phosphotyrosine" evidence="1">
    <location>
        <position position="163"/>
    </location>
</feature>
<feature type="modified residue" description="Phosphotyrosine" evidence="1">
    <location>
        <position position="165"/>
    </location>
</feature>
<proteinExistence type="evidence at protein level"/>
<accession>A0A5J5NT52</accession>
<name>EIR5D_GOSBA</name>
<comment type="function">
    <text evidence="5">Required for pathogen-associated molecular pattern (PAMP, e.g. chitin and flg22)-triggered immunity (PTI) involving reactive oxygen species (ROS) accumulation and triggering plant defense, including defense-related gene expression (e.g. PR1 and LOX) (PubMed:39488762). Ensures specific recognition of the EPD1 effector of Verticillium dahliae, resulting in a hypersensitive response known as effector-triggered immunity (ETI), characterized by the activation of programmed cell death to limit infection by the pathogen (PubMed:39488762). Priming plants with the incompatible pathogen V.dahliae leads to an increased resistance to compatible pathogens, as a result of systemic acquired resistance (SAR) (PubMed:39488762).</text>
</comment>
<comment type="catalytic activity">
    <reaction evidence="4">
        <text>L-seryl-[protein] + ATP = O-phospho-L-seryl-[protein] + ADP + H(+)</text>
        <dbReference type="Rhea" id="RHEA:17989"/>
        <dbReference type="Rhea" id="RHEA-COMP:9863"/>
        <dbReference type="Rhea" id="RHEA-COMP:11604"/>
        <dbReference type="ChEBI" id="CHEBI:15378"/>
        <dbReference type="ChEBI" id="CHEBI:29999"/>
        <dbReference type="ChEBI" id="CHEBI:30616"/>
        <dbReference type="ChEBI" id="CHEBI:83421"/>
        <dbReference type="ChEBI" id="CHEBI:456216"/>
        <dbReference type="EC" id="2.7.11.1"/>
    </reaction>
</comment>
<comment type="catalytic activity">
    <reaction evidence="4">
        <text>L-threonyl-[protein] + ATP = O-phospho-L-threonyl-[protein] + ADP + H(+)</text>
        <dbReference type="Rhea" id="RHEA:46608"/>
        <dbReference type="Rhea" id="RHEA-COMP:11060"/>
        <dbReference type="Rhea" id="RHEA-COMP:11605"/>
        <dbReference type="ChEBI" id="CHEBI:15378"/>
        <dbReference type="ChEBI" id="CHEBI:30013"/>
        <dbReference type="ChEBI" id="CHEBI:30616"/>
        <dbReference type="ChEBI" id="CHEBI:61977"/>
        <dbReference type="ChEBI" id="CHEBI:456216"/>
        <dbReference type="EC" id="2.7.11.1"/>
    </reaction>
</comment>
<comment type="subunit">
    <text evidence="5">Interacts with the V.dahliae elicitor EPD1 (AC G2WWH6).</text>
</comment>
<comment type="subcellular location">
    <subcellularLocation>
        <location evidence="2">Cell membrane</location>
    </subcellularLocation>
</comment>
<comment type="tissue specificity">
    <text evidence="5">Mostly expressed in roots and, to a lesser extent, in leaves.</text>
</comment>
<comment type="induction">
    <text evidence="5">Induced by the V.dahliae elicitor EPD1 (AC G2WWH6).</text>
</comment>
<comment type="PTM">
    <text evidence="1">Phosphorylated at Tyr-163 and Tyr-165 in the presence of pathogen-associated molecular patterns (PAMPs); this triggers the expression of pathogenesis-related genes.</text>
</comment>
<comment type="disruption phenotype">
    <text evidence="5">In plants missing both EIR5A and EIR5D, enhanced V.dahliae virulence leading to altered accumulation of reactive oxygen species (ROS) and reduced activation of cell death (PubMed:39488762). This phenotype is due to both impaired V.dahliae EPD1 effector-triggered immunity (ETI), associated with cell death, and compromised pathogen-associated molecular patterns (PAMPs)-triggered immunity (PTI), charaterized by ROS production (PubMed:39488762).</text>
</comment>
<comment type="similarity">
    <text evidence="3">Belongs to the protein kinase superfamily. Ser/Thr protein kinase family.</text>
</comment>
<keyword id="KW-0067">ATP-binding</keyword>
<keyword id="KW-1003">Cell membrane</keyword>
<keyword id="KW-0928">Hypersensitive response elicitation</keyword>
<keyword id="KW-0418">Kinase</keyword>
<keyword id="KW-0472">Membrane</keyword>
<keyword id="KW-0547">Nucleotide-binding</keyword>
<keyword id="KW-0597">Phosphoprotein</keyword>
<keyword id="KW-0611">Plant defense</keyword>
<keyword id="KW-0723">Serine/threonine-protein kinase</keyword>
<keyword id="KW-0808">Transferase</keyword>
<organism>
    <name type="scientific">Gossypium barbadense</name>
    <name type="common">Sea Island cotton</name>
    <name type="synonym">Hibiscus barbadensis</name>
    <dbReference type="NCBI Taxonomy" id="3634"/>
    <lineage>
        <taxon>Eukaryota</taxon>
        <taxon>Viridiplantae</taxon>
        <taxon>Streptophyta</taxon>
        <taxon>Embryophyta</taxon>
        <taxon>Tracheophyta</taxon>
        <taxon>Spermatophyta</taxon>
        <taxon>Magnoliopsida</taxon>
        <taxon>eudicotyledons</taxon>
        <taxon>Gunneridae</taxon>
        <taxon>Pentapetalae</taxon>
        <taxon>rosids</taxon>
        <taxon>malvids</taxon>
        <taxon>Malvales</taxon>
        <taxon>Malvaceae</taxon>
        <taxon>Malvoideae</taxon>
        <taxon>Gossypium</taxon>
    </lineage>
</organism>
<gene>
    <name evidence="6" type="primary">EIR5D</name>
    <name evidence="7" type="ORF">ES319_D13G225100v1</name>
</gene>
<sequence length="460" mass="51589">MAVMKFTWRSIIPRCSKGIEEAEAEAEAETKKQDSKQGSFSRLAMIDFSYPSSMFTEDLSTSLAGSNLYVFTLEELKVITQCFSSANFLGEGGFGPVHKGFIDDNLRPGLEAQPVAVKLLDLEGLQGHREWLTEVVFLAQLSHPHLVKLIGYCCEDENRLLVYEYMPRGSLENQLFAKYSVPLPWSTRMKIALGAAKGLAYLHEAEKPVIYRDFKASNILLDSDYSAKLSDFGLAKDGPEGDKTHVSTRVMGTRGYAAPEYIMTGHLTAMSDVYSFGVVLLELLTGRRSLDKSRSPREQNLAEWARPMLNESRRLARIMDPKLEGQYSETGARKAAALAYQCLSHRAKQRPKMSDVVNILEPLLDYGETSVASFVYTVPTHQKGGSPPKDDTDTKECEAKTELKKENGHHRNRHHHRRSHKSRDGHRHQNKSSSQSSVHSENDTSKQNLENGSNEECNID</sequence>
<protein>
    <recommendedName>
        <fullName evidence="6">EPD1-interacting receptor-like cytoplasmic serine/threonine-protein kinase 5D</fullName>
        <shortName evidence="6">GbEIR5D</shortName>
        <ecNumber evidence="4">2.7.11.1</ecNumber>
    </recommendedName>
</protein>
<evidence type="ECO:0000250" key="1">
    <source>
        <dbReference type="UniProtKB" id="A0A5J5T2N2"/>
    </source>
</evidence>
<evidence type="ECO:0000250" key="2">
    <source>
        <dbReference type="UniProtKB" id="Q9ZUF4"/>
    </source>
</evidence>
<evidence type="ECO:0000255" key="3">
    <source>
        <dbReference type="PROSITE-ProRule" id="PRU00159"/>
    </source>
</evidence>
<evidence type="ECO:0000255" key="4">
    <source>
        <dbReference type="PROSITE-ProRule" id="PRU10027"/>
    </source>
</evidence>
<evidence type="ECO:0000269" key="5">
    <source>
    </source>
</evidence>
<evidence type="ECO:0000303" key="6">
    <source>
    </source>
</evidence>
<evidence type="ECO:0000312" key="7">
    <source>
        <dbReference type="EMBL" id="KAB1996350.1"/>
    </source>
</evidence>